<proteinExistence type="predicted"/>
<gene>
    <name type="primary">ydeC</name>
    <name type="ordered locus">BSU05150</name>
</gene>
<evidence type="ECO:0000255" key="1">
    <source>
        <dbReference type="PROSITE-ProRule" id="PRU00593"/>
    </source>
</evidence>
<keyword id="KW-0238">DNA-binding</keyword>
<keyword id="KW-1185">Reference proteome</keyword>
<keyword id="KW-0804">Transcription</keyword>
<keyword id="KW-0805">Transcription regulation</keyword>
<name>YDEC_BACSU</name>
<sequence length="291" mass="34226">MKNFVIDQNLKELTEHRTVELPVACYKTTINQNINGYIPLHWHDEIQFVLILKGIALFQINEEKIEVHEGDGLFINSGYLHMAEEKEGSDCTYICLNVSPHFVLSQELYSSYVQPYMFSTNLPYLFLAGNQQWAKNILDAVKKINQLIQQKTSLYEIDITMQLTLMWKNLVVNGFQLEYDQSEMIKSHRMKQMLNWIHLHYVEKITLEDIAKAGQLSRSECCRYFKRMLNKTPLRYVMDYRIQKSLLLLQHPESNVTEVSYQVGFNSTSYFISKFQQAMNMTPLSYKKMNS</sequence>
<feature type="chain" id="PRO_0000365020" description="Uncharacterized HTH-type transcriptional regulator YdeC">
    <location>
        <begin position="1"/>
        <end position="291"/>
    </location>
</feature>
<feature type="domain" description="HTH araC/xylS-type" evidence="1">
    <location>
        <begin position="191"/>
        <end position="289"/>
    </location>
</feature>
<feature type="DNA-binding region" description="H-T-H motif" evidence="1">
    <location>
        <begin position="208"/>
        <end position="229"/>
    </location>
</feature>
<feature type="DNA-binding region" description="H-T-H motif" evidence="1">
    <location>
        <begin position="256"/>
        <end position="279"/>
    </location>
</feature>
<protein>
    <recommendedName>
        <fullName>Uncharacterized HTH-type transcriptional regulator YdeC</fullName>
    </recommendedName>
</protein>
<accession>P96660</accession>
<accession>Q797I7</accession>
<reference key="1">
    <citation type="submission" date="1997-03" db="EMBL/GenBank/DDBJ databases">
        <title>A 148 kbp sequence of the region between 35 and 47 degree of the Bacillus subtilis genome.</title>
        <authorList>
            <person name="Kasahara Y."/>
            <person name="Nakai S."/>
            <person name="Lee S."/>
            <person name="Sadaie Y."/>
            <person name="Ogasawara N."/>
        </authorList>
    </citation>
    <scope>NUCLEOTIDE SEQUENCE [GENOMIC DNA]</scope>
    <source>
        <strain>168</strain>
    </source>
</reference>
<reference key="2">
    <citation type="journal article" date="1997" name="Nature">
        <title>The complete genome sequence of the Gram-positive bacterium Bacillus subtilis.</title>
        <authorList>
            <person name="Kunst F."/>
            <person name="Ogasawara N."/>
            <person name="Moszer I."/>
            <person name="Albertini A.M."/>
            <person name="Alloni G."/>
            <person name="Azevedo V."/>
            <person name="Bertero M.G."/>
            <person name="Bessieres P."/>
            <person name="Bolotin A."/>
            <person name="Borchert S."/>
            <person name="Borriss R."/>
            <person name="Boursier L."/>
            <person name="Brans A."/>
            <person name="Braun M."/>
            <person name="Brignell S.C."/>
            <person name="Bron S."/>
            <person name="Brouillet S."/>
            <person name="Bruschi C.V."/>
            <person name="Caldwell B."/>
            <person name="Capuano V."/>
            <person name="Carter N.M."/>
            <person name="Choi S.-K."/>
            <person name="Codani J.-J."/>
            <person name="Connerton I.F."/>
            <person name="Cummings N.J."/>
            <person name="Daniel R.A."/>
            <person name="Denizot F."/>
            <person name="Devine K.M."/>
            <person name="Duesterhoeft A."/>
            <person name="Ehrlich S.D."/>
            <person name="Emmerson P.T."/>
            <person name="Entian K.-D."/>
            <person name="Errington J."/>
            <person name="Fabret C."/>
            <person name="Ferrari E."/>
            <person name="Foulger D."/>
            <person name="Fritz C."/>
            <person name="Fujita M."/>
            <person name="Fujita Y."/>
            <person name="Fuma S."/>
            <person name="Galizzi A."/>
            <person name="Galleron N."/>
            <person name="Ghim S.-Y."/>
            <person name="Glaser P."/>
            <person name="Goffeau A."/>
            <person name="Golightly E.J."/>
            <person name="Grandi G."/>
            <person name="Guiseppi G."/>
            <person name="Guy B.J."/>
            <person name="Haga K."/>
            <person name="Haiech J."/>
            <person name="Harwood C.R."/>
            <person name="Henaut A."/>
            <person name="Hilbert H."/>
            <person name="Holsappel S."/>
            <person name="Hosono S."/>
            <person name="Hullo M.-F."/>
            <person name="Itaya M."/>
            <person name="Jones L.-M."/>
            <person name="Joris B."/>
            <person name="Karamata D."/>
            <person name="Kasahara Y."/>
            <person name="Klaerr-Blanchard M."/>
            <person name="Klein C."/>
            <person name="Kobayashi Y."/>
            <person name="Koetter P."/>
            <person name="Koningstein G."/>
            <person name="Krogh S."/>
            <person name="Kumano M."/>
            <person name="Kurita K."/>
            <person name="Lapidus A."/>
            <person name="Lardinois S."/>
            <person name="Lauber J."/>
            <person name="Lazarevic V."/>
            <person name="Lee S.-M."/>
            <person name="Levine A."/>
            <person name="Liu H."/>
            <person name="Masuda S."/>
            <person name="Mauel C."/>
            <person name="Medigue C."/>
            <person name="Medina N."/>
            <person name="Mellado R.P."/>
            <person name="Mizuno M."/>
            <person name="Moestl D."/>
            <person name="Nakai S."/>
            <person name="Noback M."/>
            <person name="Noone D."/>
            <person name="O'Reilly M."/>
            <person name="Ogawa K."/>
            <person name="Ogiwara A."/>
            <person name="Oudega B."/>
            <person name="Park S.-H."/>
            <person name="Parro V."/>
            <person name="Pohl T.M."/>
            <person name="Portetelle D."/>
            <person name="Porwollik S."/>
            <person name="Prescott A.M."/>
            <person name="Presecan E."/>
            <person name="Pujic P."/>
            <person name="Purnelle B."/>
            <person name="Rapoport G."/>
            <person name="Rey M."/>
            <person name="Reynolds S."/>
            <person name="Rieger M."/>
            <person name="Rivolta C."/>
            <person name="Rocha E."/>
            <person name="Roche B."/>
            <person name="Rose M."/>
            <person name="Sadaie Y."/>
            <person name="Sato T."/>
            <person name="Scanlan E."/>
            <person name="Schleich S."/>
            <person name="Schroeter R."/>
            <person name="Scoffone F."/>
            <person name="Sekiguchi J."/>
            <person name="Sekowska A."/>
            <person name="Seror S.J."/>
            <person name="Serror P."/>
            <person name="Shin B.-S."/>
            <person name="Soldo B."/>
            <person name="Sorokin A."/>
            <person name="Tacconi E."/>
            <person name="Takagi T."/>
            <person name="Takahashi H."/>
            <person name="Takemaru K."/>
            <person name="Takeuchi M."/>
            <person name="Tamakoshi A."/>
            <person name="Tanaka T."/>
            <person name="Terpstra P."/>
            <person name="Tognoni A."/>
            <person name="Tosato V."/>
            <person name="Uchiyama S."/>
            <person name="Vandenbol M."/>
            <person name="Vannier F."/>
            <person name="Vassarotti A."/>
            <person name="Viari A."/>
            <person name="Wambutt R."/>
            <person name="Wedler E."/>
            <person name="Wedler H."/>
            <person name="Weitzenegger T."/>
            <person name="Winters P."/>
            <person name="Wipat A."/>
            <person name="Yamamoto H."/>
            <person name="Yamane K."/>
            <person name="Yasumoto K."/>
            <person name="Yata K."/>
            <person name="Yoshida K."/>
            <person name="Yoshikawa H.-F."/>
            <person name="Zumstein E."/>
            <person name="Yoshikawa H."/>
            <person name="Danchin A."/>
        </authorList>
    </citation>
    <scope>NUCLEOTIDE SEQUENCE [LARGE SCALE GENOMIC DNA]</scope>
    <source>
        <strain>168</strain>
    </source>
</reference>
<dbReference type="EMBL" id="AB001488">
    <property type="protein sequence ID" value="BAA19350.1"/>
    <property type="molecule type" value="Genomic_DNA"/>
</dbReference>
<dbReference type="EMBL" id="AL009126">
    <property type="protein sequence ID" value="CAB12322.1"/>
    <property type="molecule type" value="Genomic_DNA"/>
</dbReference>
<dbReference type="PIR" id="E69777">
    <property type="entry name" value="E69777"/>
</dbReference>
<dbReference type="RefSeq" id="NP_388396.1">
    <property type="nucleotide sequence ID" value="NC_000964.3"/>
</dbReference>
<dbReference type="RefSeq" id="WP_003234240.1">
    <property type="nucleotide sequence ID" value="NZ_OZ025638.1"/>
</dbReference>
<dbReference type="SMR" id="P96660"/>
<dbReference type="FunCoup" id="P96660">
    <property type="interactions" value="17"/>
</dbReference>
<dbReference type="STRING" id="224308.BSU05150"/>
<dbReference type="PaxDb" id="224308-BSU05150"/>
<dbReference type="EnsemblBacteria" id="CAB12322">
    <property type="protein sequence ID" value="CAB12322"/>
    <property type="gene ID" value="BSU_05150"/>
</dbReference>
<dbReference type="GeneID" id="938103"/>
<dbReference type="KEGG" id="bsu:BSU05150"/>
<dbReference type="PATRIC" id="fig|224308.179.peg.550"/>
<dbReference type="eggNOG" id="COG1917">
    <property type="taxonomic scope" value="Bacteria"/>
</dbReference>
<dbReference type="eggNOG" id="COG2207">
    <property type="taxonomic scope" value="Bacteria"/>
</dbReference>
<dbReference type="InParanoid" id="P96660"/>
<dbReference type="OrthoDB" id="9778008at2"/>
<dbReference type="PhylomeDB" id="P96660"/>
<dbReference type="BioCyc" id="BSUB:BSU05150-MONOMER"/>
<dbReference type="Proteomes" id="UP000001570">
    <property type="component" value="Chromosome"/>
</dbReference>
<dbReference type="GO" id="GO:0003700">
    <property type="term" value="F:DNA-binding transcription factor activity"/>
    <property type="evidence" value="ECO:0007669"/>
    <property type="project" value="InterPro"/>
</dbReference>
<dbReference type="GO" id="GO:0043565">
    <property type="term" value="F:sequence-specific DNA binding"/>
    <property type="evidence" value="ECO:0007669"/>
    <property type="project" value="InterPro"/>
</dbReference>
<dbReference type="CDD" id="cd02208">
    <property type="entry name" value="cupin_RmlC-like"/>
    <property type="match status" value="1"/>
</dbReference>
<dbReference type="Gene3D" id="1.10.10.60">
    <property type="entry name" value="Homeodomain-like"/>
    <property type="match status" value="2"/>
</dbReference>
<dbReference type="Gene3D" id="2.60.120.10">
    <property type="entry name" value="Jelly Rolls"/>
    <property type="match status" value="1"/>
</dbReference>
<dbReference type="InterPro" id="IPR003313">
    <property type="entry name" value="AraC-bd"/>
</dbReference>
<dbReference type="InterPro" id="IPR009057">
    <property type="entry name" value="Homeodomain-like_sf"/>
</dbReference>
<dbReference type="InterPro" id="IPR037923">
    <property type="entry name" value="HTH-like"/>
</dbReference>
<dbReference type="InterPro" id="IPR018060">
    <property type="entry name" value="HTH_AraC"/>
</dbReference>
<dbReference type="InterPro" id="IPR018062">
    <property type="entry name" value="HTH_AraC-typ_CS"/>
</dbReference>
<dbReference type="InterPro" id="IPR014710">
    <property type="entry name" value="RmlC-like_jellyroll"/>
</dbReference>
<dbReference type="InterPro" id="IPR020449">
    <property type="entry name" value="Tscrpt_reg_AraC-type_HTH"/>
</dbReference>
<dbReference type="PANTHER" id="PTHR43280">
    <property type="entry name" value="ARAC-FAMILY TRANSCRIPTIONAL REGULATOR"/>
    <property type="match status" value="1"/>
</dbReference>
<dbReference type="PANTHER" id="PTHR43280:SF28">
    <property type="entry name" value="HTH-TYPE TRANSCRIPTIONAL ACTIVATOR RHAS"/>
    <property type="match status" value="1"/>
</dbReference>
<dbReference type="Pfam" id="PF02311">
    <property type="entry name" value="AraC_binding"/>
    <property type="match status" value="1"/>
</dbReference>
<dbReference type="Pfam" id="PF12833">
    <property type="entry name" value="HTH_18"/>
    <property type="match status" value="1"/>
</dbReference>
<dbReference type="PRINTS" id="PR00032">
    <property type="entry name" value="HTHARAC"/>
</dbReference>
<dbReference type="SMART" id="SM00342">
    <property type="entry name" value="HTH_ARAC"/>
    <property type="match status" value="1"/>
</dbReference>
<dbReference type="SUPFAM" id="SSF46689">
    <property type="entry name" value="Homeodomain-like"/>
    <property type="match status" value="2"/>
</dbReference>
<dbReference type="SUPFAM" id="SSF51215">
    <property type="entry name" value="Regulatory protein AraC"/>
    <property type="match status" value="1"/>
</dbReference>
<dbReference type="PROSITE" id="PS00041">
    <property type="entry name" value="HTH_ARAC_FAMILY_1"/>
    <property type="match status" value="1"/>
</dbReference>
<dbReference type="PROSITE" id="PS01124">
    <property type="entry name" value="HTH_ARAC_FAMILY_2"/>
    <property type="match status" value="1"/>
</dbReference>
<organism>
    <name type="scientific">Bacillus subtilis (strain 168)</name>
    <dbReference type="NCBI Taxonomy" id="224308"/>
    <lineage>
        <taxon>Bacteria</taxon>
        <taxon>Bacillati</taxon>
        <taxon>Bacillota</taxon>
        <taxon>Bacilli</taxon>
        <taxon>Bacillales</taxon>
        <taxon>Bacillaceae</taxon>
        <taxon>Bacillus</taxon>
    </lineage>
</organism>